<accession>Q83RR8</accession>
<reference key="1">
    <citation type="journal article" date="2002" name="Nucleic Acids Res.">
        <title>Genome sequence of Shigella flexneri 2a: insights into pathogenicity through comparison with genomes of Escherichia coli K12 and O157.</title>
        <authorList>
            <person name="Jin Q."/>
            <person name="Yuan Z."/>
            <person name="Xu J."/>
            <person name="Wang Y."/>
            <person name="Shen Y."/>
            <person name="Lu W."/>
            <person name="Wang J."/>
            <person name="Liu H."/>
            <person name="Yang J."/>
            <person name="Yang F."/>
            <person name="Zhang X."/>
            <person name="Zhang J."/>
            <person name="Yang G."/>
            <person name="Wu H."/>
            <person name="Qu D."/>
            <person name="Dong J."/>
            <person name="Sun L."/>
            <person name="Xue Y."/>
            <person name="Zhao A."/>
            <person name="Gao Y."/>
            <person name="Zhu J."/>
            <person name="Kan B."/>
            <person name="Ding K."/>
            <person name="Chen S."/>
            <person name="Cheng H."/>
            <person name="Yao Z."/>
            <person name="He B."/>
            <person name="Chen R."/>
            <person name="Ma D."/>
            <person name="Qiang B."/>
            <person name="Wen Y."/>
            <person name="Hou Y."/>
            <person name="Yu J."/>
        </authorList>
    </citation>
    <scope>NUCLEOTIDE SEQUENCE [LARGE SCALE GENOMIC DNA]</scope>
    <source>
        <strain>301 / Serotype 2a</strain>
    </source>
</reference>
<reference key="2">
    <citation type="journal article" date="2003" name="Infect. Immun.">
        <title>Complete genome sequence and comparative genomics of Shigella flexneri serotype 2a strain 2457T.</title>
        <authorList>
            <person name="Wei J."/>
            <person name="Goldberg M.B."/>
            <person name="Burland V."/>
            <person name="Venkatesan M.M."/>
            <person name="Deng W."/>
            <person name="Fournier G."/>
            <person name="Mayhew G.F."/>
            <person name="Plunkett G. III"/>
            <person name="Rose D.J."/>
            <person name="Darling A."/>
            <person name="Mau B."/>
            <person name="Perna N.T."/>
            <person name="Payne S.M."/>
            <person name="Runyen-Janecky L.J."/>
            <person name="Zhou S."/>
            <person name="Schwartz D.C."/>
            <person name="Blattner F.R."/>
        </authorList>
    </citation>
    <scope>NUCLEOTIDE SEQUENCE [LARGE SCALE GENOMIC DNA]</scope>
    <source>
        <strain>ATCC 700930 / 2457T / Serotype 2a</strain>
    </source>
</reference>
<dbReference type="EC" id="2.3.1.286" evidence="2"/>
<dbReference type="EMBL" id="AE005674">
    <property type="protein sequence ID" value="AAN42742.1"/>
    <property type="molecule type" value="Genomic_DNA"/>
</dbReference>
<dbReference type="EMBL" id="AE014073">
    <property type="protein sequence ID" value="AAP16631.1"/>
    <property type="molecule type" value="Genomic_DNA"/>
</dbReference>
<dbReference type="RefSeq" id="NP_707035.1">
    <property type="nucleotide sequence ID" value="NC_004337.2"/>
</dbReference>
<dbReference type="RefSeq" id="WP_000952739.1">
    <property type="nucleotide sequence ID" value="NZ_WPGW01000001.1"/>
</dbReference>
<dbReference type="SMR" id="Q83RR8"/>
<dbReference type="STRING" id="198214.SF1124"/>
<dbReference type="PaxDb" id="198214-SF1124"/>
<dbReference type="GeneID" id="1024068"/>
<dbReference type="KEGG" id="sfl:SF1124"/>
<dbReference type="KEGG" id="sfx:S1204"/>
<dbReference type="PATRIC" id="fig|198214.7.peg.1315"/>
<dbReference type="HOGENOM" id="CLU_023643_3_1_6"/>
<dbReference type="Proteomes" id="UP000001006">
    <property type="component" value="Chromosome"/>
</dbReference>
<dbReference type="Proteomes" id="UP000002673">
    <property type="component" value="Chromosome"/>
</dbReference>
<dbReference type="GO" id="GO:0005737">
    <property type="term" value="C:cytoplasm"/>
    <property type="evidence" value="ECO:0007669"/>
    <property type="project" value="UniProtKB-SubCell"/>
</dbReference>
<dbReference type="GO" id="GO:0017136">
    <property type="term" value="F:histone deacetylase activity, NAD-dependent"/>
    <property type="evidence" value="ECO:0007669"/>
    <property type="project" value="TreeGrafter"/>
</dbReference>
<dbReference type="GO" id="GO:0070403">
    <property type="term" value="F:NAD+ binding"/>
    <property type="evidence" value="ECO:0007669"/>
    <property type="project" value="UniProtKB-UniRule"/>
</dbReference>
<dbReference type="GO" id="GO:0160013">
    <property type="term" value="F:NAD-dependent protein de-2-hydroxyisobutyrylase activity"/>
    <property type="evidence" value="ECO:0007669"/>
    <property type="project" value="RHEA"/>
</dbReference>
<dbReference type="GO" id="GO:0036054">
    <property type="term" value="F:protein-malonyllysine demalonylase activity"/>
    <property type="evidence" value="ECO:0007669"/>
    <property type="project" value="InterPro"/>
</dbReference>
<dbReference type="GO" id="GO:0036055">
    <property type="term" value="F:protein-succinyllysine desuccinylase activity"/>
    <property type="evidence" value="ECO:0007669"/>
    <property type="project" value="UniProtKB-UniRule"/>
</dbReference>
<dbReference type="GO" id="GO:0008270">
    <property type="term" value="F:zinc ion binding"/>
    <property type="evidence" value="ECO:0007669"/>
    <property type="project" value="UniProtKB-UniRule"/>
</dbReference>
<dbReference type="CDD" id="cd01412">
    <property type="entry name" value="SIRT5_Af1_CobB"/>
    <property type="match status" value="1"/>
</dbReference>
<dbReference type="Gene3D" id="3.30.1600.10">
    <property type="entry name" value="SIR2/SIRT2 'Small Domain"/>
    <property type="match status" value="1"/>
</dbReference>
<dbReference type="Gene3D" id="3.40.50.1220">
    <property type="entry name" value="TPP-binding domain"/>
    <property type="match status" value="1"/>
</dbReference>
<dbReference type="HAMAP" id="MF_01121">
    <property type="entry name" value="Sirtuin_ClassIII"/>
    <property type="match status" value="1"/>
</dbReference>
<dbReference type="InterPro" id="IPR029035">
    <property type="entry name" value="DHS-like_NAD/FAD-binding_dom"/>
</dbReference>
<dbReference type="InterPro" id="IPR050134">
    <property type="entry name" value="NAD-dep_sirtuin_deacylases"/>
</dbReference>
<dbReference type="InterPro" id="IPR003000">
    <property type="entry name" value="Sirtuin"/>
</dbReference>
<dbReference type="InterPro" id="IPR026591">
    <property type="entry name" value="Sirtuin_cat_small_dom_sf"/>
</dbReference>
<dbReference type="InterPro" id="IPR027546">
    <property type="entry name" value="Sirtuin_class_III"/>
</dbReference>
<dbReference type="InterPro" id="IPR026590">
    <property type="entry name" value="Ssirtuin_cat_dom"/>
</dbReference>
<dbReference type="NCBIfam" id="NF001755">
    <property type="entry name" value="PRK00481.1-5"/>
    <property type="match status" value="1"/>
</dbReference>
<dbReference type="PANTHER" id="PTHR11085:SF4">
    <property type="entry name" value="NAD-DEPENDENT PROTEIN DEACYLASE"/>
    <property type="match status" value="1"/>
</dbReference>
<dbReference type="PANTHER" id="PTHR11085">
    <property type="entry name" value="NAD-DEPENDENT PROTEIN DEACYLASE SIRTUIN-5, MITOCHONDRIAL-RELATED"/>
    <property type="match status" value="1"/>
</dbReference>
<dbReference type="Pfam" id="PF02146">
    <property type="entry name" value="SIR2"/>
    <property type="match status" value="1"/>
</dbReference>
<dbReference type="SUPFAM" id="SSF52467">
    <property type="entry name" value="DHS-like NAD/FAD-binding domain"/>
    <property type="match status" value="1"/>
</dbReference>
<dbReference type="PROSITE" id="PS50305">
    <property type="entry name" value="SIRTUIN"/>
    <property type="match status" value="1"/>
</dbReference>
<gene>
    <name evidence="2" type="primary">cobB</name>
    <name type="ordered locus">SF1124</name>
    <name type="ordered locus">S1204</name>
</gene>
<proteinExistence type="inferred from homology"/>
<organism>
    <name type="scientific">Shigella flexneri</name>
    <dbReference type="NCBI Taxonomy" id="623"/>
    <lineage>
        <taxon>Bacteria</taxon>
        <taxon>Pseudomonadati</taxon>
        <taxon>Pseudomonadota</taxon>
        <taxon>Gammaproteobacteria</taxon>
        <taxon>Enterobacterales</taxon>
        <taxon>Enterobacteriaceae</taxon>
        <taxon>Shigella</taxon>
    </lineage>
</organism>
<keyword id="KW-0877">Alternative promoter usage</keyword>
<keyword id="KW-0963">Cytoplasm</keyword>
<keyword id="KW-0479">Metal-binding</keyword>
<keyword id="KW-0520">NAD</keyword>
<keyword id="KW-1185">Reference proteome</keyword>
<keyword id="KW-0808">Transferase</keyword>
<keyword id="KW-0862">Zinc</keyword>
<protein>
    <recommendedName>
        <fullName evidence="2">NAD-dependent protein deacylase</fullName>
        <ecNumber evidence="2">2.3.1.286</ecNumber>
    </recommendedName>
    <alternativeName>
        <fullName evidence="2">Regulatory protein SIR2 homolog</fullName>
    </alternativeName>
</protein>
<feature type="chain" id="PRO_0000110349" description="NAD-dependent protein deacylase">
    <location>
        <begin position="1"/>
        <end position="273"/>
    </location>
</feature>
<feature type="domain" description="Deacetylase sirtuin-type" evidence="3">
    <location>
        <begin position="20"/>
        <end position="272"/>
    </location>
</feature>
<feature type="active site" description="Proton acceptor" evidence="2">
    <location>
        <position position="147"/>
    </location>
</feature>
<feature type="binding site" evidence="2">
    <location>
        <begin position="48"/>
        <end position="67"/>
    </location>
    <ligand>
        <name>NAD(+)</name>
        <dbReference type="ChEBI" id="CHEBI:57540"/>
    </ligand>
</feature>
<feature type="binding site" evidence="2">
    <location>
        <position position="92"/>
    </location>
    <ligand>
        <name>substrate</name>
    </ligand>
</feature>
<feature type="binding site" evidence="2">
    <location>
        <position position="95"/>
    </location>
    <ligand>
        <name>substrate</name>
    </ligand>
</feature>
<feature type="binding site" evidence="2">
    <location>
        <begin position="129"/>
        <end position="132"/>
    </location>
    <ligand>
        <name>NAD(+)</name>
        <dbReference type="ChEBI" id="CHEBI:57540"/>
    </ligand>
</feature>
<feature type="binding site" evidence="2">
    <location>
        <position position="155"/>
    </location>
    <ligand>
        <name>Zn(2+)</name>
        <dbReference type="ChEBI" id="CHEBI:29105"/>
    </ligand>
</feature>
<feature type="binding site" evidence="2">
    <location>
        <position position="174"/>
    </location>
    <ligand>
        <name>Zn(2+)</name>
        <dbReference type="ChEBI" id="CHEBI:29105"/>
    </ligand>
</feature>
<feature type="binding site" evidence="2">
    <location>
        <begin position="214"/>
        <end position="216"/>
    </location>
    <ligand>
        <name>NAD(+)</name>
        <dbReference type="ChEBI" id="CHEBI:57540"/>
    </ligand>
</feature>
<feature type="binding site" evidence="2">
    <location>
        <begin position="240"/>
        <end position="242"/>
    </location>
    <ligand>
        <name>NAD(+)</name>
        <dbReference type="ChEBI" id="CHEBI:57540"/>
    </ligand>
</feature>
<feature type="binding site" evidence="2">
    <location>
        <position position="258"/>
    </location>
    <ligand>
        <name>NAD(+)</name>
        <dbReference type="ChEBI" id="CHEBI:57540"/>
    </ligand>
</feature>
<feature type="splice variant" id="VSP_058463" description="In isoform CobB-Short." evidence="1">
    <location>
        <begin position="1"/>
        <end position="37"/>
    </location>
</feature>
<sequence length="273" mass="30923">MLSRRGHRLSRFRKNKRRLRERLRQRIFFRDKVVPEAMEKPRVLVLTGAGISAESGIRTFRAADGLWEEHRVEDVATPEGFDRDPELVQAFYNARRRQLQQPEIQPNAAHLALAKLQDALGDRFLLVTQNIDNLHERAGNTNVIHMHGELLKVRCSQSGQVLDWTGDVTPEDKCHCCQFPAPLRPHVVWFGEMPLGMDEIYMALSMADVFIAIGTSGHVYPAAGFVHEAKLHGAHTVELNLEPSQVGNEFAEKYYGPASQVVPEFVEKLLEGL</sequence>
<evidence type="ECO:0000250" key="1">
    <source>
        <dbReference type="UniProtKB" id="P0A2F2"/>
    </source>
</evidence>
<evidence type="ECO:0000255" key="2">
    <source>
        <dbReference type="HAMAP-Rule" id="MF_01121"/>
    </source>
</evidence>
<evidence type="ECO:0000255" key="3">
    <source>
        <dbReference type="PROSITE-ProRule" id="PRU00236"/>
    </source>
</evidence>
<comment type="function">
    <text evidence="2">NAD-dependent lysine deacetylase that specifically removes acetyl groups on target proteins. Also acts as a protein-lysine deacylase by mediating protein desuccinylation and de-2-hydroxyisobutyrylation. Modulates the activities of several proteins which are inactive in their acylated form.</text>
</comment>
<comment type="catalytic activity">
    <reaction evidence="2">
        <text>N(6)-acetyl-L-lysyl-[protein] + NAD(+) + H2O = 2''-O-acetyl-ADP-D-ribose + nicotinamide + L-lysyl-[protein]</text>
        <dbReference type="Rhea" id="RHEA:43636"/>
        <dbReference type="Rhea" id="RHEA-COMP:9752"/>
        <dbReference type="Rhea" id="RHEA-COMP:10731"/>
        <dbReference type="ChEBI" id="CHEBI:15377"/>
        <dbReference type="ChEBI" id="CHEBI:17154"/>
        <dbReference type="ChEBI" id="CHEBI:29969"/>
        <dbReference type="ChEBI" id="CHEBI:57540"/>
        <dbReference type="ChEBI" id="CHEBI:61930"/>
        <dbReference type="ChEBI" id="CHEBI:83767"/>
        <dbReference type="EC" id="2.3.1.286"/>
    </reaction>
</comment>
<comment type="catalytic activity">
    <reaction evidence="2">
        <text>N(6)-succinyl-L-lysyl-[protein] + NAD(+) + H2O = 2''-O-succinyl-ADP-D-ribose + nicotinamide + L-lysyl-[protein]</text>
        <dbReference type="Rhea" id="RHEA:47668"/>
        <dbReference type="Rhea" id="RHEA-COMP:9752"/>
        <dbReference type="Rhea" id="RHEA-COMP:11877"/>
        <dbReference type="ChEBI" id="CHEBI:15377"/>
        <dbReference type="ChEBI" id="CHEBI:17154"/>
        <dbReference type="ChEBI" id="CHEBI:29969"/>
        <dbReference type="ChEBI" id="CHEBI:57540"/>
        <dbReference type="ChEBI" id="CHEBI:87830"/>
        <dbReference type="ChEBI" id="CHEBI:87832"/>
    </reaction>
</comment>
<comment type="catalytic activity">
    <reaction evidence="2">
        <text>N(6)-(2-hydroxyisobutanoyl)-L-lysyl-[protein] + NAD(+) + H2O = 2''-O-(2-hydroxyisobutanoyl)-ADP-D-ribose + nicotinamide + L-lysyl-[protein]</text>
        <dbReference type="Rhea" id="RHEA:24364"/>
        <dbReference type="Rhea" id="RHEA-COMP:9752"/>
        <dbReference type="Rhea" id="RHEA-COMP:15921"/>
        <dbReference type="ChEBI" id="CHEBI:15377"/>
        <dbReference type="ChEBI" id="CHEBI:17154"/>
        <dbReference type="ChEBI" id="CHEBI:29969"/>
        <dbReference type="ChEBI" id="CHEBI:57540"/>
        <dbReference type="ChEBI" id="CHEBI:144968"/>
        <dbReference type="ChEBI" id="CHEBI:144969"/>
    </reaction>
</comment>
<comment type="cofactor">
    <cofactor evidence="2">
        <name>Zn(2+)</name>
        <dbReference type="ChEBI" id="CHEBI:29105"/>
    </cofactor>
    <text evidence="2">Binds 1 zinc ion per subunit.</text>
</comment>
<comment type="subcellular location">
    <subcellularLocation>
        <location evidence="2">Cytoplasm</location>
    </subcellularLocation>
</comment>
<comment type="alternative products">
    <event type="alternative promoter"/>
    <isoform>
        <id>Q83RR8-1</id>
        <name evidence="1">CobB-Long</name>
        <sequence type="displayed"/>
    </isoform>
    <isoform>
        <id>Q83RR8-2</id>
        <name evidence="1">CobB-Short</name>
        <sequence type="described" ref="VSP_058463"/>
    </isoform>
</comment>
<comment type="domain">
    <text evidence="2">2 residues (Tyr-92 and Arg-95) present in a large hydrophobic pocket are probably involved in substrate specificity. They are important for desuccinylation activity, but dispensable for deacetylation activity.</text>
</comment>
<comment type="similarity">
    <text evidence="2">Belongs to the sirtuin family. Class III subfamily.</text>
</comment>
<name>NPD_SHIFL</name>